<evidence type="ECO:0000255" key="1">
    <source>
        <dbReference type="HAMAP-Rule" id="MF_00318"/>
    </source>
</evidence>
<comment type="function">
    <text evidence="1">Catalyzes the reversible conversion of 2-phosphoglycerate (2-PG) into phosphoenolpyruvate (PEP). It is essential for the degradation of carbohydrates via glycolysis.</text>
</comment>
<comment type="catalytic activity">
    <reaction evidence="1">
        <text>(2R)-2-phosphoglycerate = phosphoenolpyruvate + H2O</text>
        <dbReference type="Rhea" id="RHEA:10164"/>
        <dbReference type="ChEBI" id="CHEBI:15377"/>
        <dbReference type="ChEBI" id="CHEBI:58289"/>
        <dbReference type="ChEBI" id="CHEBI:58702"/>
        <dbReference type="EC" id="4.2.1.11"/>
    </reaction>
</comment>
<comment type="cofactor">
    <cofactor evidence="1">
        <name>Mg(2+)</name>
        <dbReference type="ChEBI" id="CHEBI:18420"/>
    </cofactor>
    <text evidence="1">Binds a second Mg(2+) ion via substrate during catalysis.</text>
</comment>
<comment type="pathway">
    <text evidence="1">Carbohydrate degradation; glycolysis; pyruvate from D-glyceraldehyde 3-phosphate: step 4/5.</text>
</comment>
<comment type="subcellular location">
    <subcellularLocation>
        <location evidence="1">Cytoplasm</location>
    </subcellularLocation>
    <subcellularLocation>
        <location evidence="1">Secreted</location>
    </subcellularLocation>
    <subcellularLocation>
        <location evidence="1">Cell surface</location>
    </subcellularLocation>
    <text evidence="1">Fractions of enolase are present in both the cytoplasm and on the cell surface.</text>
</comment>
<comment type="similarity">
    <text evidence="1">Belongs to the enolase family.</text>
</comment>
<proteinExistence type="inferred from homology"/>
<reference key="1">
    <citation type="journal article" date="2008" name="Appl. Environ. Microbiol.">
        <title>The genome of Polaromonas sp. strain JS666: insights into the evolution of a hydrocarbon- and xenobiotic-degrading bacterium, and features of relevance to biotechnology.</title>
        <authorList>
            <person name="Mattes T.E."/>
            <person name="Alexander A.K."/>
            <person name="Richardson P.M."/>
            <person name="Munk A.C."/>
            <person name="Han C.S."/>
            <person name="Stothard P."/>
            <person name="Coleman N.V."/>
        </authorList>
    </citation>
    <scope>NUCLEOTIDE SEQUENCE [LARGE SCALE GENOMIC DNA]</scope>
    <source>
        <strain>JS666 / ATCC BAA-500</strain>
    </source>
</reference>
<dbReference type="EC" id="4.2.1.11" evidence="1"/>
<dbReference type="EMBL" id="CP000316">
    <property type="protein sequence ID" value="ABE45098.1"/>
    <property type="molecule type" value="Genomic_DNA"/>
</dbReference>
<dbReference type="RefSeq" id="WP_011484093.1">
    <property type="nucleotide sequence ID" value="NC_007948.1"/>
</dbReference>
<dbReference type="SMR" id="Q128E4"/>
<dbReference type="STRING" id="296591.Bpro_3184"/>
<dbReference type="KEGG" id="pol:Bpro_3184"/>
<dbReference type="eggNOG" id="COG0148">
    <property type="taxonomic scope" value="Bacteria"/>
</dbReference>
<dbReference type="HOGENOM" id="CLU_031223_2_1_4"/>
<dbReference type="OrthoDB" id="9804716at2"/>
<dbReference type="UniPathway" id="UPA00109">
    <property type="reaction ID" value="UER00187"/>
</dbReference>
<dbReference type="Proteomes" id="UP000001983">
    <property type="component" value="Chromosome"/>
</dbReference>
<dbReference type="GO" id="GO:0009986">
    <property type="term" value="C:cell surface"/>
    <property type="evidence" value="ECO:0007669"/>
    <property type="project" value="UniProtKB-SubCell"/>
</dbReference>
<dbReference type="GO" id="GO:0005576">
    <property type="term" value="C:extracellular region"/>
    <property type="evidence" value="ECO:0007669"/>
    <property type="project" value="UniProtKB-SubCell"/>
</dbReference>
<dbReference type="GO" id="GO:0000015">
    <property type="term" value="C:phosphopyruvate hydratase complex"/>
    <property type="evidence" value="ECO:0007669"/>
    <property type="project" value="InterPro"/>
</dbReference>
<dbReference type="GO" id="GO:0000287">
    <property type="term" value="F:magnesium ion binding"/>
    <property type="evidence" value="ECO:0007669"/>
    <property type="project" value="UniProtKB-UniRule"/>
</dbReference>
<dbReference type="GO" id="GO:0004634">
    <property type="term" value="F:phosphopyruvate hydratase activity"/>
    <property type="evidence" value="ECO:0007669"/>
    <property type="project" value="UniProtKB-UniRule"/>
</dbReference>
<dbReference type="GO" id="GO:0006096">
    <property type="term" value="P:glycolytic process"/>
    <property type="evidence" value="ECO:0007669"/>
    <property type="project" value="UniProtKB-UniRule"/>
</dbReference>
<dbReference type="CDD" id="cd03313">
    <property type="entry name" value="enolase"/>
    <property type="match status" value="1"/>
</dbReference>
<dbReference type="FunFam" id="3.20.20.120:FF:000001">
    <property type="entry name" value="Enolase"/>
    <property type="match status" value="1"/>
</dbReference>
<dbReference type="FunFam" id="3.30.390.10:FF:000001">
    <property type="entry name" value="Enolase"/>
    <property type="match status" value="1"/>
</dbReference>
<dbReference type="Gene3D" id="3.20.20.120">
    <property type="entry name" value="Enolase-like C-terminal domain"/>
    <property type="match status" value="1"/>
</dbReference>
<dbReference type="Gene3D" id="3.30.390.10">
    <property type="entry name" value="Enolase-like, N-terminal domain"/>
    <property type="match status" value="1"/>
</dbReference>
<dbReference type="HAMAP" id="MF_00318">
    <property type="entry name" value="Enolase"/>
    <property type="match status" value="1"/>
</dbReference>
<dbReference type="InterPro" id="IPR000941">
    <property type="entry name" value="Enolase"/>
</dbReference>
<dbReference type="InterPro" id="IPR036849">
    <property type="entry name" value="Enolase-like_C_sf"/>
</dbReference>
<dbReference type="InterPro" id="IPR029017">
    <property type="entry name" value="Enolase-like_N"/>
</dbReference>
<dbReference type="InterPro" id="IPR020810">
    <property type="entry name" value="Enolase_C"/>
</dbReference>
<dbReference type="InterPro" id="IPR020809">
    <property type="entry name" value="Enolase_CS"/>
</dbReference>
<dbReference type="InterPro" id="IPR020811">
    <property type="entry name" value="Enolase_N"/>
</dbReference>
<dbReference type="NCBIfam" id="TIGR01060">
    <property type="entry name" value="eno"/>
    <property type="match status" value="1"/>
</dbReference>
<dbReference type="PANTHER" id="PTHR11902">
    <property type="entry name" value="ENOLASE"/>
    <property type="match status" value="1"/>
</dbReference>
<dbReference type="PANTHER" id="PTHR11902:SF1">
    <property type="entry name" value="ENOLASE"/>
    <property type="match status" value="1"/>
</dbReference>
<dbReference type="Pfam" id="PF00113">
    <property type="entry name" value="Enolase_C"/>
    <property type="match status" value="1"/>
</dbReference>
<dbReference type="Pfam" id="PF03952">
    <property type="entry name" value="Enolase_N"/>
    <property type="match status" value="1"/>
</dbReference>
<dbReference type="PIRSF" id="PIRSF001400">
    <property type="entry name" value="Enolase"/>
    <property type="match status" value="1"/>
</dbReference>
<dbReference type="PRINTS" id="PR00148">
    <property type="entry name" value="ENOLASE"/>
</dbReference>
<dbReference type="SFLD" id="SFLDF00002">
    <property type="entry name" value="enolase"/>
    <property type="match status" value="1"/>
</dbReference>
<dbReference type="SFLD" id="SFLDG00178">
    <property type="entry name" value="enolase"/>
    <property type="match status" value="1"/>
</dbReference>
<dbReference type="SMART" id="SM01192">
    <property type="entry name" value="Enolase_C"/>
    <property type="match status" value="1"/>
</dbReference>
<dbReference type="SMART" id="SM01193">
    <property type="entry name" value="Enolase_N"/>
    <property type="match status" value="1"/>
</dbReference>
<dbReference type="SUPFAM" id="SSF51604">
    <property type="entry name" value="Enolase C-terminal domain-like"/>
    <property type="match status" value="1"/>
</dbReference>
<dbReference type="SUPFAM" id="SSF54826">
    <property type="entry name" value="Enolase N-terminal domain-like"/>
    <property type="match status" value="1"/>
</dbReference>
<dbReference type="PROSITE" id="PS00164">
    <property type="entry name" value="ENOLASE"/>
    <property type="match status" value="1"/>
</dbReference>
<name>ENO_POLSJ</name>
<keyword id="KW-0963">Cytoplasm</keyword>
<keyword id="KW-0324">Glycolysis</keyword>
<keyword id="KW-0456">Lyase</keyword>
<keyword id="KW-0460">Magnesium</keyword>
<keyword id="KW-0479">Metal-binding</keyword>
<keyword id="KW-1185">Reference proteome</keyword>
<keyword id="KW-0964">Secreted</keyword>
<gene>
    <name evidence="1" type="primary">eno</name>
    <name type="ordered locus">Bpro_3184</name>
</gene>
<organism>
    <name type="scientific">Polaromonas sp. (strain JS666 / ATCC BAA-500)</name>
    <dbReference type="NCBI Taxonomy" id="296591"/>
    <lineage>
        <taxon>Bacteria</taxon>
        <taxon>Pseudomonadati</taxon>
        <taxon>Pseudomonadota</taxon>
        <taxon>Betaproteobacteria</taxon>
        <taxon>Burkholderiales</taxon>
        <taxon>Comamonadaceae</taxon>
        <taxon>Polaromonas</taxon>
    </lineage>
</organism>
<protein>
    <recommendedName>
        <fullName evidence="1">Enolase</fullName>
        <ecNumber evidence="1">4.2.1.11</ecNumber>
    </recommendedName>
    <alternativeName>
        <fullName evidence="1">2-phospho-D-glycerate hydro-lyase</fullName>
    </alternativeName>
    <alternativeName>
        <fullName evidence="1">2-phosphoglycerate dehydratase</fullName>
    </alternativeName>
</protein>
<sequence>MSAIVDIVGREILDSRGNPTVECDVLLESGVMGRAAVPSGASTGSREAIELRDGDKSRYLGKGVLKAVEHINTEISEAVLGLDASEQAFLDRTLIDLDGTDNKSRLGANATLAVSMAVARAAAEEAGLPLYRYFGGSGAMQMPVPMMNVVNGGAHANNNLDLQELMIIPIGAPSFREAVRYGAEVFHALKKILHDKGMSVAVGDEGGFAPNVPSHEAAIQMILEAIDKAGYVAGEQIALGLDCAASEFYKDGKYVLAGEGLSLDATEWTNILATWVDKYPIISIEDGMAEGDWDGWKILTERLGKQVQLVGDDLFVTNTKILKEGIDKHIANSILIKINQIGTLTETFAAIEMAKRAGYTAVISHRSGETEDSTIADIAVGTNAGQIKTGSLSRSDRMAKYNQLLRIEEDLGDIATYPGRAAFYNLR</sequence>
<accession>Q128E4</accession>
<feature type="chain" id="PRO_0000267071" description="Enolase">
    <location>
        <begin position="1"/>
        <end position="427"/>
    </location>
</feature>
<feature type="active site" description="Proton donor" evidence="1">
    <location>
        <position position="205"/>
    </location>
</feature>
<feature type="active site" description="Proton acceptor" evidence="1">
    <location>
        <position position="337"/>
    </location>
</feature>
<feature type="binding site" evidence="1">
    <location>
        <position position="163"/>
    </location>
    <ligand>
        <name>(2R)-2-phosphoglycerate</name>
        <dbReference type="ChEBI" id="CHEBI:58289"/>
    </ligand>
</feature>
<feature type="binding site" evidence="1">
    <location>
        <position position="242"/>
    </location>
    <ligand>
        <name>Mg(2+)</name>
        <dbReference type="ChEBI" id="CHEBI:18420"/>
    </ligand>
</feature>
<feature type="binding site" evidence="1">
    <location>
        <position position="285"/>
    </location>
    <ligand>
        <name>Mg(2+)</name>
        <dbReference type="ChEBI" id="CHEBI:18420"/>
    </ligand>
</feature>
<feature type="binding site" evidence="1">
    <location>
        <position position="312"/>
    </location>
    <ligand>
        <name>Mg(2+)</name>
        <dbReference type="ChEBI" id="CHEBI:18420"/>
    </ligand>
</feature>
<feature type="binding site" evidence="1">
    <location>
        <position position="337"/>
    </location>
    <ligand>
        <name>(2R)-2-phosphoglycerate</name>
        <dbReference type="ChEBI" id="CHEBI:58289"/>
    </ligand>
</feature>
<feature type="binding site" evidence="1">
    <location>
        <position position="366"/>
    </location>
    <ligand>
        <name>(2R)-2-phosphoglycerate</name>
        <dbReference type="ChEBI" id="CHEBI:58289"/>
    </ligand>
</feature>
<feature type="binding site" evidence="1">
    <location>
        <position position="367"/>
    </location>
    <ligand>
        <name>(2R)-2-phosphoglycerate</name>
        <dbReference type="ChEBI" id="CHEBI:58289"/>
    </ligand>
</feature>
<feature type="binding site" evidence="1">
    <location>
        <position position="388"/>
    </location>
    <ligand>
        <name>(2R)-2-phosphoglycerate</name>
        <dbReference type="ChEBI" id="CHEBI:58289"/>
    </ligand>
</feature>